<gene>
    <name evidence="1" type="primary">argC</name>
    <name type="ordered locus">Avi_1674</name>
</gene>
<reference key="1">
    <citation type="journal article" date="2009" name="J. Bacteriol.">
        <title>Genome sequences of three Agrobacterium biovars help elucidate the evolution of multichromosome genomes in bacteria.</title>
        <authorList>
            <person name="Slater S.C."/>
            <person name="Goldman B.S."/>
            <person name="Goodner B."/>
            <person name="Setubal J.C."/>
            <person name="Farrand S.K."/>
            <person name="Nester E.W."/>
            <person name="Burr T.J."/>
            <person name="Banta L."/>
            <person name="Dickerman A.W."/>
            <person name="Paulsen I."/>
            <person name="Otten L."/>
            <person name="Suen G."/>
            <person name="Welch R."/>
            <person name="Almeida N.F."/>
            <person name="Arnold F."/>
            <person name="Burton O.T."/>
            <person name="Du Z."/>
            <person name="Ewing A."/>
            <person name="Godsy E."/>
            <person name="Heisel S."/>
            <person name="Houmiel K.L."/>
            <person name="Jhaveri J."/>
            <person name="Lu J."/>
            <person name="Miller N.M."/>
            <person name="Norton S."/>
            <person name="Chen Q."/>
            <person name="Phoolcharoen W."/>
            <person name="Ohlin V."/>
            <person name="Ondrusek D."/>
            <person name="Pride N."/>
            <person name="Stricklin S.L."/>
            <person name="Sun J."/>
            <person name="Wheeler C."/>
            <person name="Wilson L."/>
            <person name="Zhu H."/>
            <person name="Wood D.W."/>
        </authorList>
    </citation>
    <scope>NUCLEOTIDE SEQUENCE [LARGE SCALE GENOMIC DNA]</scope>
    <source>
        <strain>ATCC BAA-846 / DSM 112012 / S4</strain>
    </source>
</reference>
<comment type="function">
    <text evidence="1">Catalyzes the NADPH-dependent reduction of N-acetyl-5-glutamyl phosphate to yield N-acetyl-L-glutamate 5-semialdehyde.</text>
</comment>
<comment type="catalytic activity">
    <reaction evidence="1">
        <text>N-acetyl-L-glutamate 5-semialdehyde + phosphate + NADP(+) = N-acetyl-L-glutamyl 5-phosphate + NADPH + H(+)</text>
        <dbReference type="Rhea" id="RHEA:21588"/>
        <dbReference type="ChEBI" id="CHEBI:15378"/>
        <dbReference type="ChEBI" id="CHEBI:29123"/>
        <dbReference type="ChEBI" id="CHEBI:43474"/>
        <dbReference type="ChEBI" id="CHEBI:57783"/>
        <dbReference type="ChEBI" id="CHEBI:57936"/>
        <dbReference type="ChEBI" id="CHEBI:58349"/>
        <dbReference type="EC" id="1.2.1.38"/>
    </reaction>
</comment>
<comment type="pathway">
    <text evidence="1">Amino-acid biosynthesis; L-arginine biosynthesis; N(2)-acetyl-L-ornithine from L-glutamate: step 3/4.</text>
</comment>
<comment type="subcellular location">
    <subcellularLocation>
        <location evidence="1">Cytoplasm</location>
    </subcellularLocation>
</comment>
<comment type="similarity">
    <text evidence="1">Belongs to the NAGSA dehydrogenase family. Type 2 subfamily.</text>
</comment>
<feature type="chain" id="PRO_1000163992" description="N-acetyl-gamma-glutamyl-phosphate reductase">
    <location>
        <begin position="1"/>
        <end position="310"/>
    </location>
</feature>
<feature type="active site" evidence="1">
    <location>
        <position position="117"/>
    </location>
</feature>
<keyword id="KW-0028">Amino-acid biosynthesis</keyword>
<keyword id="KW-0055">Arginine biosynthesis</keyword>
<keyword id="KW-0963">Cytoplasm</keyword>
<keyword id="KW-0521">NADP</keyword>
<keyword id="KW-0560">Oxidoreductase</keyword>
<keyword id="KW-1185">Reference proteome</keyword>
<protein>
    <recommendedName>
        <fullName evidence="1">N-acetyl-gamma-glutamyl-phosphate reductase</fullName>
        <shortName evidence="1">AGPR</shortName>
        <ecNumber evidence="1">1.2.1.38</ecNumber>
    </recommendedName>
    <alternativeName>
        <fullName evidence="1">N-acetyl-glutamate semialdehyde dehydrogenase</fullName>
        <shortName evidence="1">NAGSA dehydrogenase</shortName>
    </alternativeName>
</protein>
<organism>
    <name type="scientific">Allorhizobium ampelinum (strain ATCC BAA-846 / DSM 112012 / S4)</name>
    <name type="common">Agrobacterium vitis (strain S4)</name>
    <dbReference type="NCBI Taxonomy" id="311402"/>
    <lineage>
        <taxon>Bacteria</taxon>
        <taxon>Pseudomonadati</taxon>
        <taxon>Pseudomonadota</taxon>
        <taxon>Alphaproteobacteria</taxon>
        <taxon>Hyphomicrobiales</taxon>
        <taxon>Rhizobiaceae</taxon>
        <taxon>Rhizobium/Agrobacterium group</taxon>
        <taxon>Allorhizobium</taxon>
        <taxon>Allorhizobium ampelinum</taxon>
    </lineage>
</organism>
<evidence type="ECO:0000255" key="1">
    <source>
        <dbReference type="HAMAP-Rule" id="MF_01110"/>
    </source>
</evidence>
<dbReference type="EC" id="1.2.1.38" evidence="1"/>
<dbReference type="EMBL" id="CP000633">
    <property type="protein sequence ID" value="ACM36199.1"/>
    <property type="molecule type" value="Genomic_DNA"/>
</dbReference>
<dbReference type="RefSeq" id="WP_015915622.1">
    <property type="nucleotide sequence ID" value="NC_011989.1"/>
</dbReference>
<dbReference type="SMR" id="B9JVB9"/>
<dbReference type="STRING" id="311402.Avi_1674"/>
<dbReference type="KEGG" id="avi:Avi_1674"/>
<dbReference type="eggNOG" id="COG0002">
    <property type="taxonomic scope" value="Bacteria"/>
</dbReference>
<dbReference type="HOGENOM" id="CLU_077118_0_0_5"/>
<dbReference type="UniPathway" id="UPA00068">
    <property type="reaction ID" value="UER00108"/>
</dbReference>
<dbReference type="Proteomes" id="UP000001596">
    <property type="component" value="Chromosome 1"/>
</dbReference>
<dbReference type="GO" id="GO:0005737">
    <property type="term" value="C:cytoplasm"/>
    <property type="evidence" value="ECO:0007669"/>
    <property type="project" value="UniProtKB-SubCell"/>
</dbReference>
<dbReference type="GO" id="GO:0003942">
    <property type="term" value="F:N-acetyl-gamma-glutamyl-phosphate reductase activity"/>
    <property type="evidence" value="ECO:0007669"/>
    <property type="project" value="UniProtKB-UniRule"/>
</dbReference>
<dbReference type="GO" id="GO:0051287">
    <property type="term" value="F:NAD binding"/>
    <property type="evidence" value="ECO:0007669"/>
    <property type="project" value="InterPro"/>
</dbReference>
<dbReference type="GO" id="GO:0006526">
    <property type="term" value="P:L-arginine biosynthetic process"/>
    <property type="evidence" value="ECO:0007669"/>
    <property type="project" value="UniProtKB-UniRule"/>
</dbReference>
<dbReference type="CDD" id="cd23935">
    <property type="entry name" value="AGPR_2_C"/>
    <property type="match status" value="1"/>
</dbReference>
<dbReference type="CDD" id="cd17896">
    <property type="entry name" value="AGPR_2_N"/>
    <property type="match status" value="1"/>
</dbReference>
<dbReference type="Gene3D" id="3.30.360.10">
    <property type="entry name" value="Dihydrodipicolinate Reductase, domain 2"/>
    <property type="match status" value="1"/>
</dbReference>
<dbReference type="Gene3D" id="3.40.50.720">
    <property type="entry name" value="NAD(P)-binding Rossmann-like Domain"/>
    <property type="match status" value="1"/>
</dbReference>
<dbReference type="HAMAP" id="MF_01110">
    <property type="entry name" value="ArgC_type2"/>
    <property type="match status" value="1"/>
</dbReference>
<dbReference type="InterPro" id="IPR023013">
    <property type="entry name" value="AGPR_AS"/>
</dbReference>
<dbReference type="InterPro" id="IPR010136">
    <property type="entry name" value="AGPR_type-2"/>
</dbReference>
<dbReference type="InterPro" id="IPR036291">
    <property type="entry name" value="NAD(P)-bd_dom_sf"/>
</dbReference>
<dbReference type="InterPro" id="IPR050085">
    <property type="entry name" value="NAGSA_dehydrogenase"/>
</dbReference>
<dbReference type="InterPro" id="IPR000534">
    <property type="entry name" value="Semialdehyde_DH_NAD-bd"/>
</dbReference>
<dbReference type="NCBIfam" id="TIGR01851">
    <property type="entry name" value="argC_other"/>
    <property type="match status" value="1"/>
</dbReference>
<dbReference type="PANTHER" id="PTHR32338:SF10">
    <property type="entry name" value="N-ACETYL-GAMMA-GLUTAMYL-PHOSPHATE REDUCTASE, CHLOROPLASTIC-RELATED"/>
    <property type="match status" value="1"/>
</dbReference>
<dbReference type="PANTHER" id="PTHR32338">
    <property type="entry name" value="N-ACETYL-GAMMA-GLUTAMYL-PHOSPHATE REDUCTASE, CHLOROPLASTIC-RELATED-RELATED"/>
    <property type="match status" value="1"/>
</dbReference>
<dbReference type="Pfam" id="PF01118">
    <property type="entry name" value="Semialdhyde_dh"/>
    <property type="match status" value="1"/>
</dbReference>
<dbReference type="Pfam" id="PF22698">
    <property type="entry name" value="Semialdhyde_dhC_1"/>
    <property type="match status" value="1"/>
</dbReference>
<dbReference type="SMART" id="SM00859">
    <property type="entry name" value="Semialdhyde_dh"/>
    <property type="match status" value="1"/>
</dbReference>
<dbReference type="SUPFAM" id="SSF55347">
    <property type="entry name" value="Glyceraldehyde-3-phosphate dehydrogenase-like, C-terminal domain"/>
    <property type="match status" value="1"/>
</dbReference>
<dbReference type="SUPFAM" id="SSF51735">
    <property type="entry name" value="NAD(P)-binding Rossmann-fold domains"/>
    <property type="match status" value="1"/>
</dbReference>
<dbReference type="PROSITE" id="PS01224">
    <property type="entry name" value="ARGC"/>
    <property type="match status" value="1"/>
</dbReference>
<name>ARGC_ALLAM</name>
<proteinExistence type="inferred from homology"/>
<sequence length="310" mass="33169">MTAKIFIDGEHGTTGLQIRSRMADRRDVELLSIPQEQRRNAALREDLLNSADIAILCLPDDASKEAVSMLAGNNNVRIIDTSTAFRVAQDWTYGFAEMDKAQGDKIRSARCVANPGCYPTGAIALIRPLRAAGILPDGYPVSVNAVSGYSGGGKQLIAQMEDESHPEHLTVNNYVYGLNLKHKHVPEMKAHGLLDRAPLFSPSVGRFPQGMIVQVPLFLEDLADGATVESIHAALSAHYAGQDIVKVVALEDSAKLGRVDAEELVGQDTMKLFAFGNPGTGHVNLVAVLDNLGKGASGAAVQNMDLMLSA</sequence>
<accession>B9JVB9</accession>